<accession>P07355</accession>
<accession>Q567R4</accession>
<accession>Q6N0B3</accession>
<accession>Q8TBV2</accession>
<accession>Q96DD5</accession>
<accession>Q9UDH8</accession>
<name>ANXA2_HUMAN</name>
<feature type="initiator methionine" description="Removed" evidence="21">
    <location>
        <position position="1"/>
    </location>
</feature>
<feature type="chain" id="PRO_0000067470" description="Annexin A2">
    <location>
        <begin position="2"/>
        <end position="339"/>
    </location>
</feature>
<feature type="repeat" description="Annexin 1" evidence="5">
    <location>
        <begin position="33"/>
        <end position="104"/>
    </location>
</feature>
<feature type="repeat" description="Annexin 2" evidence="5">
    <location>
        <begin position="105"/>
        <end position="176"/>
    </location>
</feature>
<feature type="repeat" description="Annexin 3" evidence="5">
    <location>
        <begin position="189"/>
        <end position="261"/>
    </location>
</feature>
<feature type="repeat" description="Annexin 4" evidence="5">
    <location>
        <begin position="265"/>
        <end position="336"/>
    </location>
</feature>
<feature type="region of interest" description="S100A10-binding site" evidence="4">
    <location>
        <begin position="2"/>
        <end position="24"/>
    </location>
</feature>
<feature type="modified residue" description="N-acetylserine" evidence="21">
    <location>
        <position position="2"/>
    </location>
</feature>
<feature type="modified residue" description="Phosphotyrosine; by SRC" evidence="7 17">
    <location>
        <position position="24"/>
    </location>
</feature>
<feature type="modified residue" description="Phosphoserine; by PKC" evidence="17 18">
    <location>
        <position position="26"/>
    </location>
</feature>
<feature type="modified residue" description="N6-acetyllysine; alternate" evidence="2">
    <location>
        <position position="49"/>
    </location>
</feature>
<feature type="modified residue" description="N6-acetyllysine" evidence="2">
    <location>
        <position position="152"/>
    </location>
</feature>
<feature type="modified residue" description="Phosphoserine" evidence="28">
    <location>
        <position position="184"/>
    </location>
</feature>
<feature type="modified residue" description="Phosphotyrosine" evidence="2">
    <location>
        <position position="199"/>
    </location>
</feature>
<feature type="modified residue" description="N6-acetyllysine" evidence="2">
    <location>
        <position position="227"/>
    </location>
</feature>
<feature type="cross-link" description="Glycyl lysine isopeptide (Lys-Gly) (interchain with G-Cter in SUMO1); alternate" evidence="29">
    <location>
        <position position="49"/>
    </location>
</feature>
<feature type="cross-link" description="Glycyl lysine isopeptide (Lys-Gly) (interchain with G-Cter in SUMO2); alternate" evidence="30">
    <location>
        <position position="49"/>
    </location>
</feature>
<feature type="splice variant" id="VSP_038091" description="In isoform 2." evidence="22">
    <original>M</original>
    <variation>MGRQLAGCGDAGKKASFKM</variation>
    <location>
        <position position="1"/>
    </location>
</feature>
<feature type="sequence variant" id="VAR_012982" description="Does not affect interaction with PCSK9; dbSNP:rs17845226." evidence="8 13">
    <original>V</original>
    <variation>L</variation>
    <location>
        <position position="98"/>
    </location>
</feature>
<feature type="mutagenesis site" description="Abolishes heat stress-induced cell surface localization." evidence="7">
    <original>Y</original>
    <variation>A</variation>
    <location>
        <position position="24"/>
    </location>
</feature>
<feature type="mutagenesis site" description="Stronger interaction with S100A4." evidence="17">
    <original>S</original>
    <variation>E</variation>
    <location>
        <position position="26"/>
    </location>
</feature>
<feature type="mutagenesis site" description="No effect on interaction with PCSK9." evidence="13">
    <original>KAYTNFDAE</original>
    <variation>SAYTNFNAS</variation>
    <location>
        <begin position="28"/>
        <end position="36"/>
    </location>
</feature>
<feature type="mutagenesis site" description="Slightly decreases interaction with PCSK9." evidence="13">
    <original>RDALNIETAIK</original>
    <variation>SDALNIHTAIM</variation>
    <location>
        <begin position="37"/>
        <end position="47"/>
    </location>
</feature>
<feature type="mutagenesis site" description="Strongly decreases interaction with PCSK9." evidence="11 13">
    <original>RRTKK</original>
    <variation>AATAA</variation>
    <location>
        <begin position="77"/>
        <end position="81"/>
    </location>
</feature>
<feature type="mutagenesis site" description="Decreases interaction with PCSK9. Strongly decreases interaction with PCSK9; when associated with K-88." evidence="11">
    <original>RRTK</original>
    <variation>AATA</variation>
    <location>
        <begin position="77"/>
        <end position="80"/>
    </location>
</feature>
<feature type="mutagenesis site" description="No effect on interaction with PCSK9." evidence="11">
    <original>KKELA</original>
    <variation>GKPLD</variation>
    <location>
        <begin position="80"/>
        <end position="84"/>
    </location>
</feature>
<feature type="mutagenesis site" description="Strongly decreases interaction with PCSK9; when associated with 77-A--A-80." evidence="11">
    <original>K</original>
    <variation>A</variation>
    <location>
        <position position="88"/>
    </location>
</feature>
<feature type="sequence conflict" description="In Ref. 9; AA sequence." evidence="23" ref="9">
    <original>A</original>
    <variation>P</variation>
    <location>
        <position position="29"/>
    </location>
</feature>
<feature type="sequence conflict" description="In Ref. 4; CAE45704." evidence="23" ref="4">
    <original>D</original>
    <variation>G</variation>
    <location>
        <position position="166"/>
    </location>
</feature>
<feature type="sequence conflict" description="In Ref. 6; AAH23990." evidence="23" ref="6">
    <original>V</original>
    <variation>A</variation>
    <location>
        <position position="293"/>
    </location>
</feature>
<feature type="helix" evidence="33">
    <location>
        <begin position="4"/>
        <end position="12"/>
    </location>
</feature>
<feature type="turn" evidence="36">
    <location>
        <begin position="24"/>
        <end position="27"/>
    </location>
</feature>
<feature type="helix" evidence="32">
    <location>
        <begin position="35"/>
        <end position="47"/>
    </location>
</feature>
<feature type="strand" evidence="34">
    <location>
        <begin position="48"/>
        <end position="50"/>
    </location>
</feature>
<feature type="helix" evidence="32">
    <location>
        <begin position="53"/>
        <end position="60"/>
    </location>
</feature>
<feature type="helix" evidence="32">
    <location>
        <begin position="65"/>
        <end position="79"/>
    </location>
</feature>
<feature type="helix" evidence="32">
    <location>
        <begin position="83"/>
        <end position="90"/>
    </location>
</feature>
<feature type="helix" evidence="32">
    <location>
        <begin position="93"/>
        <end position="103"/>
    </location>
</feature>
<feature type="helix" evidence="32">
    <location>
        <begin position="106"/>
        <end position="117"/>
    </location>
</feature>
<feature type="strand" evidence="31">
    <location>
        <begin position="120"/>
        <end position="122"/>
    </location>
</feature>
<feature type="helix" evidence="32">
    <location>
        <begin position="125"/>
        <end position="134"/>
    </location>
</feature>
<feature type="helix" evidence="32">
    <location>
        <begin position="137"/>
        <end position="151"/>
    </location>
</feature>
<feature type="helix" evidence="32">
    <location>
        <begin position="155"/>
        <end position="161"/>
    </location>
</feature>
<feature type="helix" evidence="32">
    <location>
        <begin position="165"/>
        <end position="175"/>
    </location>
</feature>
<feature type="helix" evidence="32">
    <location>
        <begin position="188"/>
        <end position="200"/>
    </location>
</feature>
<feature type="turn" evidence="32">
    <location>
        <begin position="201"/>
        <end position="204"/>
    </location>
</feature>
<feature type="strand" evidence="32">
    <location>
        <begin position="205"/>
        <end position="207"/>
    </location>
</feature>
<feature type="helix" evidence="32">
    <location>
        <begin position="210"/>
        <end position="219"/>
    </location>
</feature>
<feature type="helix" evidence="32">
    <location>
        <begin position="222"/>
        <end position="232"/>
    </location>
</feature>
<feature type="turn" evidence="32">
    <location>
        <begin position="233"/>
        <end position="235"/>
    </location>
</feature>
<feature type="strand" evidence="35">
    <location>
        <begin position="236"/>
        <end position="238"/>
    </location>
</feature>
<feature type="helix" evidence="32">
    <location>
        <begin position="240"/>
        <end position="247"/>
    </location>
</feature>
<feature type="helix" evidence="32">
    <location>
        <begin position="250"/>
        <end position="264"/>
    </location>
</feature>
<feature type="helix" evidence="32">
    <location>
        <begin position="266"/>
        <end position="278"/>
    </location>
</feature>
<feature type="strand" evidence="32">
    <location>
        <begin position="279"/>
        <end position="282"/>
    </location>
</feature>
<feature type="helix" evidence="32">
    <location>
        <begin position="285"/>
        <end position="295"/>
    </location>
</feature>
<feature type="turn" evidence="32">
    <location>
        <begin position="296"/>
        <end position="298"/>
    </location>
</feature>
<feature type="helix" evidence="32">
    <location>
        <begin position="300"/>
        <end position="311"/>
    </location>
</feature>
<feature type="helix" evidence="32">
    <location>
        <begin position="315"/>
        <end position="322"/>
    </location>
</feature>
<feature type="helix" evidence="32">
    <location>
        <begin position="325"/>
        <end position="335"/>
    </location>
</feature>
<sequence>MSTVHEILCKLSLEGDHSTPPSAYGSVKAYTNFDAERDALNIETAIKTKGVDEVTIVNILTNRSNAQRQDIAFAYQRRTKKELASALKSALSGHLETVILGLLKTPAQYDASELKASMKGLGTDEDSLIEIICSRTNQELQEINRVYKEMYKTDLEKDIISDTSGDFRKLMVALAKGRRAEDGSVIDYELIDQDARDLYDAGVKRKGTDVPKWISIMTERSVPHLQKVFDRYKSYSPYDMLESIRKEVKGDLENAFLNLVQCIQNKPLYFADRLYDSMKGKGTRDKVLIRIMVSRSEVDMLKIRSEFKRKYGKSLYYYIQQDTKGDYQKALLYLCGGDD</sequence>
<comment type="function">
    <text evidence="2 11 13 14">Calcium-regulated membrane-binding protein whose affinity for calcium is greatly enhanced by anionic phospholipids. It binds two calcium ions with high affinity. May be involved in heat-stress response. Inhibits PCSK9-enhanced LDLR degradation, probably reduces PCSK9 protein levels via a translational mechanism but also competes with LDLR for binding with PCSK9 (PubMed:18799458, PubMed:22848640, PubMed:24808179). Binds to endosomes damaged by phagocytosis of particulate wear debris and participates in endosomal membrane stabilization, thereby limiting NLRP3 inflammasome activation (By similarity). Required for endothelial cell surface plasmin generation and may support fibrinolytic surveillance and neoangiogenesis (By similarity).</text>
</comment>
<comment type="function">
    <text evidence="15">(Microbial infection) Binds M.pneumoniae CARDS toxin, probably serves as one receptor for this pathogen. When ANXA2 is down-regulated by siRNA, less toxin binds to human cells and less vacuolization (a symptom of M.pneumoniae infection) is seen.</text>
</comment>
<comment type="subunit">
    <text evidence="1 2 3 6 11 12 16 19">Heterotetramer containing 2 light chains of S100A10/p11 and 2 heavy chains of ANXA2/p36 (By similarity). Interacts with ATP1B1 (By similarity). Interacts with DYSF (By similarity). Interacts with COCH (PubMed:21886777). Interacts (via repeat Annexin 1) with PCSK9 (via the C-terminal domain); the interaction inhibits the degradation of LDLR (PubMed:18799458). Interacts with CEACAM1 (via the cytoplasmic domain); this interaction is regulated by phosphorylation of CEACAM1 (PubMed:14522961). Interacts with APPL2 and APPL1; targets APPL2 to endosomes and acting in parallel to RAB5A (By similarity). Interacts with S100A4 (PubMed:28669632). May interact with UBAP2 (PubMed:27121050). Interacts with PLEKHG4B; this interaction is required for PLEKHG4B localization to cell-cell adhesions (PubMed:33310911).</text>
</comment>
<comment type="subunit">
    <text evidence="20">(Microbial infection) Interacts with human cytomegalovirus (HCMV).</text>
</comment>
<comment type="subunit">
    <text evidence="15">(Microbial infection) Interacts with M.pneumoniae CARDS toxin; CARDS probably uses this protein as a receptor. A portion of internalized CARDS remains associated with intracellular annexin 2.</text>
</comment>
<comment type="interaction">
    <interactant intactId="EBI-352622">
        <id>P07355</id>
    </interactant>
    <interactant intactId="EBI-352622">
        <id>P07355</id>
        <label>ANXA2</label>
    </interactant>
    <organismsDiffer>false</organismsDiffer>
    <experiments>5</experiments>
</comment>
<comment type="interaction">
    <interactant intactId="EBI-352622">
        <id>P07355</id>
    </interactant>
    <interactant intactId="EBI-297353">
        <id>P00533</id>
        <label>EGFR</label>
    </interactant>
    <organismsDiffer>false</organismsDiffer>
    <experiments>4</experiments>
</comment>
<comment type="interaction">
    <interactant intactId="EBI-352622">
        <id>P07355</id>
    </interactant>
    <interactant intactId="EBI-346417">
        <id>Q92556</id>
        <label>ELMO1</label>
    </interactant>
    <organismsDiffer>false</organismsDiffer>
    <experiments>3</experiments>
</comment>
<comment type="interaction">
    <interactant intactId="EBI-352622">
        <id>P07355</id>
    </interactant>
    <interactant intactId="EBI-8052560">
        <id>Q15811-1</id>
        <label>ITSN1</label>
    </interactant>
    <organismsDiffer>false</organismsDiffer>
    <experiments>2</experiments>
</comment>
<comment type="interaction">
    <interactant intactId="EBI-352622">
        <id>P07355</id>
    </interactant>
    <interactant intactId="EBI-366233">
        <id>P10636-8</id>
        <label>MAPT</label>
    </interactant>
    <organismsDiffer>false</organismsDiffer>
    <experiments>10</experiments>
</comment>
<comment type="interaction">
    <interactant intactId="EBI-352622">
        <id>P07355</id>
    </interactant>
    <interactant intactId="EBI-744248">
        <id>P40692</id>
        <label>MLH1</label>
    </interactant>
    <organismsDiffer>false</organismsDiffer>
    <experiments>6</experiments>
</comment>
<comment type="interaction">
    <interactant intactId="EBI-352622">
        <id>P07355</id>
    </interactant>
    <interactant intactId="EBI-1149760">
        <id>Q15599</id>
        <label>NHERF2</label>
    </interactant>
    <organismsDiffer>false</organismsDiffer>
    <experiments>6</experiments>
</comment>
<comment type="interaction">
    <interactant intactId="EBI-352622">
        <id>P07355</id>
    </interactant>
    <interactant intactId="EBI-2555618">
        <id>Q9BXS6</id>
        <label>NUSAP1</label>
    </interactant>
    <organismsDiffer>false</organismsDiffer>
    <experiments>5</experiments>
</comment>
<comment type="interaction">
    <interactant intactId="EBI-352622">
        <id>P07355</id>
    </interactant>
    <interactant intactId="EBI-358311">
        <id>P12004</id>
        <label>PCNA</label>
    </interactant>
    <organismsDiffer>false</organismsDiffer>
    <experiments>2</experiments>
</comment>
<comment type="interaction">
    <interactant intactId="EBI-352622">
        <id>P07355</id>
    </interactant>
    <interactant intactId="EBI-7539251">
        <id>Q8NBP7</id>
        <label>PCSK9</label>
    </interactant>
    <organismsDiffer>false</organismsDiffer>
    <experiments>7</experiments>
</comment>
<comment type="interaction">
    <interactant intactId="EBI-352622">
        <id>P07355</id>
    </interactant>
    <interactant intactId="EBI-752420">
        <id>Q9NUX5</id>
        <label>POT1</label>
    </interactant>
    <organismsDiffer>false</organismsDiffer>
    <experiments>2</experiments>
</comment>
<comment type="interaction">
    <interactant intactId="EBI-352622">
        <id>P07355</id>
    </interactant>
    <interactant intactId="EBI-717048">
        <id>P60903</id>
        <label>S100A10</label>
    </interactant>
    <organismsDiffer>false</organismsDiffer>
    <experiments>6</experiments>
</comment>
<comment type="interaction">
    <interactant intactId="EBI-352622">
        <id>P07355</id>
    </interactant>
    <interactant intactId="EBI-723529">
        <id>Q14508</id>
        <label>WFDC2</label>
    </interactant>
    <organismsDiffer>false</organismsDiffer>
    <experiments>37</experiments>
</comment>
<comment type="interaction">
    <interactant intactId="EBI-352622">
        <id>P07355</id>
    </interactant>
    <interactant intactId="EBI-2259548">
        <id>P75409</id>
        <label>cards</label>
    </interactant>
    <organismsDiffer>true</organismsDiffer>
    <experiments>6</experiments>
</comment>
<comment type="interaction">
    <interactant intactId="EBI-352622">
        <id>P07355</id>
    </interactant>
    <interactant intactId="EBI-12740262">
        <id>P15363</id>
        <label>p37</label>
    </interactant>
    <organismsDiffer>true</organismsDiffer>
    <experiments>24</experiments>
</comment>
<comment type="interaction">
    <interactant intactId="EBI-352622">
        <id>P07355</id>
    </interactant>
    <interactant intactId="EBI-2504426">
        <id>B7UM99</id>
        <label>tir</label>
    </interactant>
    <organismsDiffer>true</organismsDiffer>
    <experiments>3</experiments>
</comment>
<comment type="interaction">
    <interactant intactId="EBI-352622">
        <id>P07355</id>
    </interactant>
    <interactant intactId="EBI-6480811">
        <id>Q7DB77</id>
        <label>tir</label>
    </interactant>
    <organismsDiffer>true</organismsDiffer>
    <experiments>2</experiments>
</comment>
<comment type="interaction">
    <interactant intactId="EBI-352622">
        <id>P07355</id>
    </interactant>
    <interactant intactId="EBI-6927873">
        <id>PRO_0000045602</id>
        <dbReference type="UniProtKB" id="Q99IB8"/>
    </interactant>
    <organismsDiffer>true</organismsDiffer>
    <experiments>5</experiments>
</comment>
<comment type="subcellular location">
    <subcellularLocation>
        <location evidence="10">Secreted</location>
        <location evidence="10">Extracellular space</location>
        <location evidence="10">Extracellular matrix</location>
        <location evidence="10">Basement membrane</location>
    </subcellularLocation>
    <subcellularLocation>
        <location evidence="10">Melanosome</location>
    </subcellularLocation>
    <text>In the lamina beneath the plasma membrane. Identified by mass spectrometry in melanosome fractions from stage I to stage IV. Translocated from the cytoplasm to the cell surface through a Golgi-independent mechanism.</text>
</comment>
<comment type="alternative products">
    <event type="alternative splicing"/>
    <isoform>
        <id>P07355-1</id>
        <name>1</name>
        <sequence type="displayed"/>
    </isoform>
    <isoform>
        <id>P07355-2</id>
        <name>2</name>
        <sequence type="described" ref="VSP_038091"/>
    </isoform>
</comment>
<comment type="domain">
    <text>A pair of annexin repeats may form one binding site for calcium and phospholipid.</text>
</comment>
<comment type="PTM">
    <text evidence="7 18">Phosphorylation of Tyr-24 enhances heat stress-induced translocation to the cell surface.</text>
</comment>
<comment type="PTM">
    <text evidence="9">ISGylated.</text>
</comment>
<comment type="disease">
    <text evidence="16">Increased expression of ANXA2 is associated with hepatocellular carcinoma tumor progression.</text>
</comment>
<comment type="miscellaneous">
    <text>It may cross-link plasma membrane phospholipids with actin and the cytoskeleton and be involved with exocytosis.</text>
</comment>
<comment type="similarity">
    <text evidence="5 23">Belongs to the annexin family.</text>
</comment>
<comment type="sequence caution" evidence="23">
    <conflict type="erroneous initiation">
        <sequence resource="EMBL-CDS" id="AAH66955"/>
    </conflict>
    <text>Extended N-terminus.</text>
</comment>
<comment type="online information" name="Protein Spotlight">
    <link uri="https://www.proteinspotlight.org/back_issues/086"/>
    <text>Red velvet - Issue 86 of September 2007</text>
</comment>
<gene>
    <name type="primary">ANXA2</name>
    <name type="synonym">ANX2</name>
    <name type="synonym">ANX2L4</name>
    <name type="synonym">CAL1H</name>
    <name type="synonym">LPC2D</name>
</gene>
<dbReference type="EMBL" id="D00017">
    <property type="protein sequence ID" value="BAA00013.1"/>
    <property type="molecule type" value="mRNA"/>
</dbReference>
<dbReference type="EMBL" id="BT007432">
    <property type="protein sequence ID" value="AAP36100.1"/>
    <property type="molecule type" value="mRNA"/>
</dbReference>
<dbReference type="EMBL" id="BX640598">
    <property type="protein sequence ID" value="CAE45704.1"/>
    <property type="molecule type" value="mRNA"/>
</dbReference>
<dbReference type="EMBL" id="AC087385">
    <property type="status" value="NOT_ANNOTATED_CDS"/>
    <property type="molecule type" value="Genomic_DNA"/>
</dbReference>
<dbReference type="EMBL" id="BC001388">
    <property type="protein sequence ID" value="AAH01388.1"/>
    <property type="molecule type" value="mRNA"/>
</dbReference>
<dbReference type="EMBL" id="BC009564">
    <property type="protein sequence ID" value="AAH09564.1"/>
    <property type="molecule type" value="mRNA"/>
</dbReference>
<dbReference type="EMBL" id="BC015834">
    <property type="protein sequence ID" value="AAH15834.1"/>
    <property type="molecule type" value="mRNA"/>
</dbReference>
<dbReference type="EMBL" id="BC016774">
    <property type="protein sequence ID" value="AAH16774.1"/>
    <property type="molecule type" value="mRNA"/>
</dbReference>
<dbReference type="EMBL" id="BC021114">
    <property type="protein sequence ID" value="AAH21114.1"/>
    <property type="molecule type" value="mRNA"/>
</dbReference>
<dbReference type="EMBL" id="BC023990">
    <property type="protein sequence ID" value="AAH23990.1"/>
    <property type="molecule type" value="mRNA"/>
</dbReference>
<dbReference type="EMBL" id="BC052558">
    <property type="protein sequence ID" value="AAH52558.1"/>
    <property type="molecule type" value="mRNA"/>
</dbReference>
<dbReference type="EMBL" id="BC052567">
    <property type="protein sequence ID" value="AAH52567.1"/>
    <property type="molecule type" value="mRNA"/>
</dbReference>
<dbReference type="EMBL" id="BC066955">
    <property type="protein sequence ID" value="AAH66955.2"/>
    <property type="status" value="ALT_INIT"/>
    <property type="molecule type" value="mRNA"/>
</dbReference>
<dbReference type="EMBL" id="BC068065">
    <property type="protein sequence ID" value="AAH68065.1"/>
    <property type="molecule type" value="mRNA"/>
</dbReference>
<dbReference type="EMBL" id="BC093056">
    <property type="protein sequence ID" value="AAH93056.1"/>
    <property type="molecule type" value="mRNA"/>
</dbReference>
<dbReference type="CCDS" id="CCDS10175.1">
    <molecule id="P07355-1"/>
</dbReference>
<dbReference type="CCDS" id="CCDS32256.1">
    <molecule id="P07355-2"/>
</dbReference>
<dbReference type="PIR" id="A23942">
    <property type="entry name" value="LUHU36"/>
</dbReference>
<dbReference type="RefSeq" id="NP_001002857.1">
    <molecule id="P07355-1"/>
    <property type="nucleotide sequence ID" value="NM_001002857.2"/>
</dbReference>
<dbReference type="RefSeq" id="NP_001002858.1">
    <molecule id="P07355-2"/>
    <property type="nucleotide sequence ID" value="NM_001002858.3"/>
</dbReference>
<dbReference type="RefSeq" id="NP_001129487.1">
    <molecule id="P07355-1"/>
    <property type="nucleotide sequence ID" value="NM_001136015.3"/>
</dbReference>
<dbReference type="RefSeq" id="NP_004030.1">
    <molecule id="P07355-1"/>
    <property type="nucleotide sequence ID" value="NM_004039.3"/>
</dbReference>
<dbReference type="RefSeq" id="XP_016877579.1">
    <property type="nucleotide sequence ID" value="XM_017022090.1"/>
</dbReference>
<dbReference type="RefSeq" id="XP_016877580.1">
    <property type="nucleotide sequence ID" value="XM_017022091.1"/>
</dbReference>
<dbReference type="PDB" id="1W7B">
    <property type="method" value="X-ray"/>
    <property type="resolution" value="1.52 A"/>
    <property type="chains" value="A=1-339"/>
</dbReference>
<dbReference type="PDB" id="1XJL">
    <property type="method" value="X-ray"/>
    <property type="resolution" value="2.59 A"/>
    <property type="chains" value="A/B=21-339"/>
</dbReference>
<dbReference type="PDB" id="2HYU">
    <property type="method" value="X-ray"/>
    <property type="resolution" value="1.86 A"/>
    <property type="chains" value="A=32-339"/>
</dbReference>
<dbReference type="PDB" id="2HYV">
    <property type="method" value="X-ray"/>
    <property type="resolution" value="1.42 A"/>
    <property type="chains" value="A=32-339"/>
</dbReference>
<dbReference type="PDB" id="2HYW">
    <property type="method" value="X-ray"/>
    <property type="resolution" value="2.10 A"/>
    <property type="chains" value="A/B=32-339"/>
</dbReference>
<dbReference type="PDB" id="4DRW">
    <property type="method" value="X-ray"/>
    <property type="resolution" value="3.50 A"/>
    <property type="chains" value="A/B/C/D=2-16"/>
</dbReference>
<dbReference type="PDB" id="4FTG">
    <property type="method" value="X-ray"/>
    <property type="resolution" value="2.51 A"/>
    <property type="chains" value="C/D=2-16"/>
</dbReference>
<dbReference type="PDB" id="4HRH">
    <property type="method" value="X-ray"/>
    <property type="resolution" value="3.00 A"/>
    <property type="chains" value="A/B=2-16"/>
</dbReference>
<dbReference type="PDB" id="5LPU">
    <property type="method" value="X-ray"/>
    <property type="resolution" value="2.10 A"/>
    <property type="chains" value="A/B=2-339"/>
</dbReference>
<dbReference type="PDB" id="5LPX">
    <property type="method" value="X-ray"/>
    <property type="resolution" value="1.90 A"/>
    <property type="chains" value="A=2-339"/>
</dbReference>
<dbReference type="PDB" id="5LQ0">
    <property type="method" value="X-ray"/>
    <property type="resolution" value="2.90 A"/>
    <property type="chains" value="A/B=2-339"/>
</dbReference>
<dbReference type="PDB" id="5LQ2">
    <property type="method" value="X-ray"/>
    <property type="resolution" value="3.40 A"/>
    <property type="chains" value="A/B=2-339"/>
</dbReference>
<dbReference type="PDB" id="5N7D">
    <property type="method" value="X-ray"/>
    <property type="resolution" value="2.30 A"/>
    <property type="chains" value="A/B=22-339"/>
</dbReference>
<dbReference type="PDB" id="5N7F">
    <property type="method" value="X-ray"/>
    <property type="resolution" value="2.30 A"/>
    <property type="chains" value="A/B=22-339"/>
</dbReference>
<dbReference type="PDB" id="5N7G">
    <property type="method" value="X-ray"/>
    <property type="resolution" value="2.95 A"/>
    <property type="chains" value="A/B=22-339"/>
</dbReference>
<dbReference type="PDB" id="6TWQ">
    <property type="method" value="X-ray"/>
    <property type="resolution" value="2.65 A"/>
    <property type="chains" value="A/B=22-339"/>
</dbReference>
<dbReference type="PDB" id="6TWU">
    <property type="method" value="X-ray"/>
    <property type="resolution" value="2.40 A"/>
    <property type="chains" value="A/B=22-339"/>
</dbReference>
<dbReference type="PDB" id="6TWX">
    <property type="method" value="X-ray"/>
    <property type="resolution" value="2.30 A"/>
    <property type="chains" value="A/B=22-339"/>
</dbReference>
<dbReference type="PDB" id="6TWY">
    <property type="method" value="X-ray"/>
    <property type="resolution" value="2.30 A"/>
    <property type="chains" value="A/B=22-339"/>
</dbReference>
<dbReference type="PDB" id="7DTO">
    <property type="method" value="X-ray"/>
    <property type="resolution" value="2.80 A"/>
    <property type="chains" value="A=31-339"/>
</dbReference>
<dbReference type="PDB" id="7EQ7">
    <property type="method" value="X-ray"/>
    <property type="resolution" value="2.11 A"/>
    <property type="chains" value="A=1-339"/>
</dbReference>
<dbReference type="PDB" id="7NMI">
    <property type="method" value="X-ray"/>
    <property type="resolution" value="2.10 A"/>
    <property type="chains" value="B=29-339"/>
</dbReference>
<dbReference type="PDB" id="7P70">
    <property type="method" value="X-ray"/>
    <property type="resolution" value="2.00 A"/>
    <property type="chains" value="A=22-339"/>
</dbReference>
<dbReference type="PDB" id="7P71">
    <property type="method" value="X-ray"/>
    <property type="resolution" value="2.60 A"/>
    <property type="chains" value="A/B=22-339"/>
</dbReference>
<dbReference type="PDB" id="7P72">
    <property type="method" value="X-ray"/>
    <property type="resolution" value="2.15 A"/>
    <property type="chains" value="A=22-339"/>
</dbReference>
<dbReference type="PDB" id="7P73">
    <property type="method" value="X-ray"/>
    <property type="resolution" value="1.85 A"/>
    <property type="chains" value="A=23-339"/>
</dbReference>
<dbReference type="PDB" id="7P74">
    <property type="method" value="X-ray"/>
    <property type="resolution" value="1.90 A"/>
    <property type="chains" value="A=22-339"/>
</dbReference>
<dbReference type="PDB" id="7PC3">
    <property type="method" value="X-ray"/>
    <property type="resolution" value="1.95 A"/>
    <property type="chains" value="A=29-339"/>
</dbReference>
<dbReference type="PDB" id="7PC4">
    <property type="method" value="X-ray"/>
    <property type="resolution" value="2.30 A"/>
    <property type="chains" value="A=22-339"/>
</dbReference>
<dbReference type="PDB" id="7PC5">
    <property type="method" value="X-ray"/>
    <property type="resolution" value="1.70 A"/>
    <property type="chains" value="A=22-339"/>
</dbReference>
<dbReference type="PDB" id="7PC7">
    <property type="method" value="X-ray"/>
    <property type="resolution" value="2.10 A"/>
    <property type="chains" value="A/B=22-339"/>
</dbReference>
<dbReference type="PDB" id="7PC8">
    <property type="method" value="X-ray"/>
    <property type="resolution" value="2.50 A"/>
    <property type="chains" value="A/B=22-339"/>
</dbReference>
<dbReference type="PDB" id="7PC9">
    <property type="method" value="X-ray"/>
    <property type="resolution" value="2.40 A"/>
    <property type="chains" value="A/B=29-339"/>
</dbReference>
<dbReference type="PDB" id="7PCB">
    <property type="method" value="X-ray"/>
    <property type="resolution" value="2.00 A"/>
    <property type="chains" value="A=29-339"/>
</dbReference>
<dbReference type="PDB" id="7QQL">
    <property type="method" value="X-ray"/>
    <property type="resolution" value="2.44 A"/>
    <property type="chains" value="A/B/C=29-339"/>
</dbReference>
<dbReference type="PDB" id="7QQM">
    <property type="method" value="X-ray"/>
    <property type="resolution" value="1.60 A"/>
    <property type="chains" value="A=23-339"/>
</dbReference>
<dbReference type="PDB" id="7QQN">
    <property type="method" value="X-ray"/>
    <property type="resolution" value="2.45 A"/>
    <property type="chains" value="A/C=22-339"/>
</dbReference>
<dbReference type="PDB" id="7ZVN">
    <property type="method" value="X-ray"/>
    <property type="resolution" value="1.87 A"/>
    <property type="chains" value="A=34-339"/>
</dbReference>
<dbReference type="PDB" id="7ZVX">
    <property type="method" value="X-ray"/>
    <property type="resolution" value="2.40 A"/>
    <property type="chains" value="A/B=34-339"/>
</dbReference>
<dbReference type="PDB" id="8AEL">
    <property type="method" value="X-ray"/>
    <property type="resolution" value="2.20 A"/>
    <property type="chains" value="A=22-339"/>
</dbReference>
<dbReference type="PDBsum" id="1W7B"/>
<dbReference type="PDBsum" id="1XJL"/>
<dbReference type="PDBsum" id="2HYU"/>
<dbReference type="PDBsum" id="2HYV"/>
<dbReference type="PDBsum" id="2HYW"/>
<dbReference type="PDBsum" id="4DRW"/>
<dbReference type="PDBsum" id="4FTG"/>
<dbReference type="PDBsum" id="4HRH"/>
<dbReference type="PDBsum" id="5LPU"/>
<dbReference type="PDBsum" id="5LPX"/>
<dbReference type="PDBsum" id="5LQ0"/>
<dbReference type="PDBsum" id="5LQ2"/>
<dbReference type="PDBsum" id="5N7D"/>
<dbReference type="PDBsum" id="5N7F"/>
<dbReference type="PDBsum" id="5N7G"/>
<dbReference type="PDBsum" id="6TWQ"/>
<dbReference type="PDBsum" id="6TWU"/>
<dbReference type="PDBsum" id="6TWX"/>
<dbReference type="PDBsum" id="6TWY"/>
<dbReference type="PDBsum" id="7DTO"/>
<dbReference type="PDBsum" id="7EQ7"/>
<dbReference type="PDBsum" id="7NMI"/>
<dbReference type="PDBsum" id="7P70"/>
<dbReference type="PDBsum" id="7P71"/>
<dbReference type="PDBsum" id="7P72"/>
<dbReference type="PDBsum" id="7P73"/>
<dbReference type="PDBsum" id="7P74"/>
<dbReference type="PDBsum" id="7PC3"/>
<dbReference type="PDBsum" id="7PC4"/>
<dbReference type="PDBsum" id="7PC5"/>
<dbReference type="PDBsum" id="7PC7"/>
<dbReference type="PDBsum" id="7PC8"/>
<dbReference type="PDBsum" id="7PC9"/>
<dbReference type="PDBsum" id="7PCB"/>
<dbReference type="PDBsum" id="7QQL"/>
<dbReference type="PDBsum" id="7QQM"/>
<dbReference type="PDBsum" id="7QQN"/>
<dbReference type="PDBsum" id="7ZVN"/>
<dbReference type="PDBsum" id="7ZVX"/>
<dbReference type="PDBsum" id="8AEL"/>
<dbReference type="SMR" id="P07355"/>
<dbReference type="BioGRID" id="106799">
    <property type="interactions" value="421"/>
</dbReference>
<dbReference type="ComplexPortal" id="CPX-130">
    <property type="entry name" value="ANXA2-PCSK9 complex"/>
</dbReference>
<dbReference type="ComplexPortal" id="CPX-850">
    <property type="entry name" value="AHNAK - Annexin A2 - S100-A10 complex"/>
</dbReference>
<dbReference type="ComplexPortal" id="CPX-853">
    <property type="entry name" value="Annexin A2 - S100-A10 complex"/>
</dbReference>
<dbReference type="ComplexPortal" id="CPX-856">
    <property type="entry name" value="SMARCA3 - Annexin A2 - S100-A10 complex"/>
</dbReference>
<dbReference type="CORUM" id="P07355"/>
<dbReference type="FunCoup" id="P07355">
    <property type="interactions" value="174"/>
</dbReference>
<dbReference type="IntAct" id="P07355">
    <property type="interactions" value="130"/>
</dbReference>
<dbReference type="MINT" id="P07355"/>
<dbReference type="STRING" id="9606.ENSP00000346032"/>
<dbReference type="ChEMBL" id="CHEMBL1764938"/>
<dbReference type="DrugBank" id="DB11638">
    <property type="generic name" value="Artenimol"/>
</dbReference>
<dbReference type="DrugBank" id="DB00591">
    <property type="generic name" value="Fluocinolone acetonide"/>
</dbReference>
<dbReference type="DrugBank" id="DB06245">
    <property type="generic name" value="Lanoteplase"/>
</dbReference>
<dbReference type="TCDB" id="1.A.31.1.4">
    <property type="family name" value="the annexin (annexin) family"/>
</dbReference>
<dbReference type="GlyCosmos" id="P07355">
    <property type="glycosylation" value="1 site, 2 glycans"/>
</dbReference>
<dbReference type="GlyGen" id="P07355">
    <property type="glycosylation" value="2 sites, 2 O-linked glycans (2 sites)"/>
</dbReference>
<dbReference type="iPTMnet" id="P07355"/>
<dbReference type="MetOSite" id="P07355"/>
<dbReference type="PhosphoSitePlus" id="P07355"/>
<dbReference type="SwissPalm" id="P07355"/>
<dbReference type="BioMuta" id="ANXA2"/>
<dbReference type="DMDM" id="113950"/>
<dbReference type="REPRODUCTION-2DPAGE" id="IPI00455315"/>
<dbReference type="REPRODUCTION-2DPAGE" id="P07355"/>
<dbReference type="CPTAC" id="CPTAC-462"/>
<dbReference type="jPOST" id="P07355"/>
<dbReference type="MassIVE" id="P07355"/>
<dbReference type="PaxDb" id="9606-ENSP00000346032"/>
<dbReference type="PeptideAtlas" id="P07355"/>
<dbReference type="PRIDE" id="P07355"/>
<dbReference type="ProteomicsDB" id="51995">
    <molecule id="P07355-1"/>
</dbReference>
<dbReference type="ProteomicsDB" id="51996">
    <molecule id="P07355-2"/>
</dbReference>
<dbReference type="TopDownProteomics" id="P07355-1">
    <molecule id="P07355-1"/>
</dbReference>
<dbReference type="Antibodypedia" id="3808">
    <property type="antibodies" value="880 antibodies from 46 providers"/>
</dbReference>
<dbReference type="DNASU" id="302"/>
<dbReference type="Ensembl" id="ENST00000332680.8">
    <molecule id="P07355-2"/>
    <property type="protein sequence ID" value="ENSP00000346032.3"/>
    <property type="gene ID" value="ENSG00000182718.18"/>
</dbReference>
<dbReference type="Ensembl" id="ENST00000396024.7">
    <molecule id="P07355-1"/>
    <property type="protein sequence ID" value="ENSP00000379342.3"/>
    <property type="gene ID" value="ENSG00000182718.18"/>
</dbReference>
<dbReference type="Ensembl" id="ENST00000421017.6">
    <molecule id="P07355-1"/>
    <property type="protein sequence ID" value="ENSP00000411352.2"/>
    <property type="gene ID" value="ENSG00000182718.18"/>
</dbReference>
<dbReference type="Ensembl" id="ENST00000451270.7">
    <molecule id="P07355-1"/>
    <property type="protein sequence ID" value="ENSP00000387545.3"/>
    <property type="gene ID" value="ENSG00000182718.18"/>
</dbReference>
<dbReference type="Ensembl" id="ENST00000557906.6">
    <molecule id="P07355-1"/>
    <property type="protein sequence ID" value="ENSP00000452895.2"/>
    <property type="gene ID" value="ENSG00000182718.18"/>
</dbReference>
<dbReference type="Ensembl" id="ENST00000558558.6">
    <molecule id="P07355-1"/>
    <property type="protein sequence ID" value="ENSP00000452981.2"/>
    <property type="gene ID" value="ENSG00000182718.18"/>
</dbReference>
<dbReference type="Ensembl" id="ENST00000559818.6">
    <molecule id="P07355-1"/>
    <property type="protein sequence ID" value="ENSP00000453859.2"/>
    <property type="gene ID" value="ENSG00000182718.18"/>
</dbReference>
<dbReference type="Ensembl" id="ENST00000559956.6">
    <molecule id="P07355-1"/>
    <property type="protein sequence ID" value="ENSP00000453694.2"/>
    <property type="gene ID" value="ENSG00000182718.18"/>
</dbReference>
<dbReference type="Ensembl" id="ENST00000560468.6">
    <molecule id="P07355-1"/>
    <property type="protein sequence ID" value="ENSP00000452858.2"/>
    <property type="gene ID" value="ENSG00000182718.18"/>
</dbReference>
<dbReference type="Ensembl" id="ENST00000677968.1">
    <molecule id="P07355-1"/>
    <property type="protein sequence ID" value="ENSP00000503447.1"/>
    <property type="gene ID" value="ENSG00000182718.18"/>
</dbReference>
<dbReference type="Ensembl" id="ENST00000678061.1">
    <molecule id="P07355-1"/>
    <property type="protein sequence ID" value="ENSP00000503855.1"/>
    <property type="gene ID" value="ENSG00000182718.18"/>
</dbReference>
<dbReference type="Ensembl" id="ENST00000678450.1">
    <molecule id="P07355-1"/>
    <property type="protein sequence ID" value="ENSP00000504164.1"/>
    <property type="gene ID" value="ENSG00000182718.18"/>
</dbReference>
<dbReference type="Ensembl" id="ENST00000678870.1">
    <molecule id="P07355-1"/>
    <property type="protein sequence ID" value="ENSP00000503757.1"/>
    <property type="gene ID" value="ENSG00000182718.18"/>
</dbReference>
<dbReference type="Ensembl" id="ENST00000679109.1">
    <molecule id="P07355-1"/>
    <property type="protein sequence ID" value="ENSP00000504035.1"/>
    <property type="gene ID" value="ENSG00000182718.18"/>
</dbReference>
<dbReference type="GeneID" id="302"/>
<dbReference type="KEGG" id="hsa:302"/>
<dbReference type="MANE-Select" id="ENST00000451270.7">
    <property type="protein sequence ID" value="ENSP00000387545.3"/>
    <property type="RefSeq nucleotide sequence ID" value="NM_004039.3"/>
    <property type="RefSeq protein sequence ID" value="NP_004030.1"/>
</dbReference>
<dbReference type="UCSC" id="uc002agk.4">
    <molecule id="P07355-1"/>
    <property type="organism name" value="human"/>
</dbReference>
<dbReference type="AGR" id="HGNC:537"/>
<dbReference type="CTD" id="302"/>
<dbReference type="DisGeNET" id="302"/>
<dbReference type="GeneCards" id="ANXA2"/>
<dbReference type="HGNC" id="HGNC:537">
    <property type="gene designation" value="ANXA2"/>
</dbReference>
<dbReference type="HPA" id="ENSG00000182718">
    <property type="expression patterns" value="Tissue enhanced (esophagus)"/>
</dbReference>
<dbReference type="MIM" id="151740">
    <property type="type" value="gene"/>
</dbReference>
<dbReference type="neXtProt" id="NX_P07355"/>
<dbReference type="OpenTargets" id="ENSG00000182718"/>
<dbReference type="PharmGKB" id="PA24827"/>
<dbReference type="VEuPathDB" id="HostDB:ENSG00000182718"/>
<dbReference type="eggNOG" id="KOG0819">
    <property type="taxonomic scope" value="Eukaryota"/>
</dbReference>
<dbReference type="GeneTree" id="ENSGT00940000154257"/>
<dbReference type="HOGENOM" id="CLU_025300_0_0_1"/>
<dbReference type="InParanoid" id="P07355"/>
<dbReference type="OMA" id="DLMRIRT"/>
<dbReference type="OrthoDB" id="37886at2759"/>
<dbReference type="PAN-GO" id="P07355">
    <property type="GO annotations" value="13 GO annotations based on evolutionary models"/>
</dbReference>
<dbReference type="TreeFam" id="TF105452"/>
<dbReference type="PathwayCommons" id="P07355"/>
<dbReference type="Reactome" id="R-HSA-445355">
    <property type="pathway name" value="Smooth Muscle Contraction"/>
</dbReference>
<dbReference type="Reactome" id="R-HSA-6798695">
    <property type="pathway name" value="Neutrophil degranulation"/>
</dbReference>
<dbReference type="Reactome" id="R-HSA-75205">
    <property type="pathway name" value="Dissolution of Fibrin Clot"/>
</dbReference>
<dbReference type="Reactome" id="R-HSA-8950505">
    <property type="pathway name" value="Gene and protein expression by JAK-STAT signaling after Interleukin-12 stimulation"/>
</dbReference>
<dbReference type="Reactome" id="R-HSA-9860927">
    <property type="pathway name" value="Turbulent (oscillatory, disturbed) flow shear stress activates signaling by PIEZO1 and integrins in endothelial cells"/>
</dbReference>
<dbReference type="SignaLink" id="P07355"/>
<dbReference type="SIGNOR" id="P07355"/>
<dbReference type="BioGRID-ORCS" id="302">
    <property type="hits" value="14 hits in 1160 CRISPR screens"/>
</dbReference>
<dbReference type="CD-CODE" id="91857CE7">
    <property type="entry name" value="Nucleolus"/>
</dbReference>
<dbReference type="CD-CODE" id="FB4E32DD">
    <property type="entry name" value="Presynaptic clusters and postsynaptic densities"/>
</dbReference>
<dbReference type="ChiTaRS" id="ANXA2">
    <property type="organism name" value="human"/>
</dbReference>
<dbReference type="EvolutionaryTrace" id="P07355"/>
<dbReference type="GeneWiki" id="Annexin_A2"/>
<dbReference type="GenomeRNAi" id="302"/>
<dbReference type="Pharos" id="P07355">
    <property type="development level" value="Tbio"/>
</dbReference>
<dbReference type="PRO" id="PR:P07355"/>
<dbReference type="Proteomes" id="UP000005640">
    <property type="component" value="Chromosome 15"/>
</dbReference>
<dbReference type="RNAct" id="P07355">
    <property type="molecule type" value="protein"/>
</dbReference>
<dbReference type="Bgee" id="ENSG00000182718">
    <property type="expression patterns" value="Expressed in bronchial epithelial cell and 205 other cell types or tissues"/>
</dbReference>
<dbReference type="ExpressionAtlas" id="P07355">
    <property type="expression patterns" value="baseline and differential"/>
</dbReference>
<dbReference type="GO" id="GO:0005912">
    <property type="term" value="C:adherens junction"/>
    <property type="evidence" value="ECO:0007005"/>
    <property type="project" value="BHF-UCL"/>
</dbReference>
<dbReference type="GO" id="GO:1990665">
    <property type="term" value="C:AnxA2-p11 complex"/>
    <property type="evidence" value="ECO:0000314"/>
    <property type="project" value="UniProtKB"/>
</dbReference>
<dbReference type="GO" id="GO:0035578">
    <property type="term" value="C:azurophil granule lumen"/>
    <property type="evidence" value="ECO:0000304"/>
    <property type="project" value="Reactome"/>
</dbReference>
<dbReference type="GO" id="GO:0005604">
    <property type="term" value="C:basement membrane"/>
    <property type="evidence" value="ECO:0007669"/>
    <property type="project" value="UniProtKB-SubCell"/>
</dbReference>
<dbReference type="GO" id="GO:0016323">
    <property type="term" value="C:basolateral plasma membrane"/>
    <property type="evidence" value="ECO:0000250"/>
    <property type="project" value="BHF-UCL"/>
</dbReference>
<dbReference type="GO" id="GO:0009986">
    <property type="term" value="C:cell surface"/>
    <property type="evidence" value="ECO:0000314"/>
    <property type="project" value="UniProtKB"/>
</dbReference>
<dbReference type="GO" id="GO:0062023">
    <property type="term" value="C:collagen-containing extracellular matrix"/>
    <property type="evidence" value="ECO:0007005"/>
    <property type="project" value="BHF-UCL"/>
</dbReference>
<dbReference type="GO" id="GO:0001533">
    <property type="term" value="C:cornified envelope"/>
    <property type="evidence" value="ECO:0007669"/>
    <property type="project" value="Ensembl"/>
</dbReference>
<dbReference type="GO" id="GO:0005737">
    <property type="term" value="C:cytoplasm"/>
    <property type="evidence" value="ECO:0000314"/>
    <property type="project" value="UniProtKB"/>
</dbReference>
<dbReference type="GO" id="GO:0005829">
    <property type="term" value="C:cytosol"/>
    <property type="evidence" value="ECO:0000304"/>
    <property type="project" value="Reactome"/>
</dbReference>
<dbReference type="GO" id="GO:0005769">
    <property type="term" value="C:early endosome"/>
    <property type="evidence" value="ECO:0007669"/>
    <property type="project" value="Ensembl"/>
</dbReference>
<dbReference type="GO" id="GO:0005768">
    <property type="term" value="C:endosome"/>
    <property type="evidence" value="ECO:0000314"/>
    <property type="project" value="UniProtKB"/>
</dbReference>
<dbReference type="GO" id="GO:0070062">
    <property type="term" value="C:extracellular exosome"/>
    <property type="evidence" value="ECO:0000314"/>
    <property type="project" value="UniProtKB"/>
</dbReference>
<dbReference type="GO" id="GO:0005576">
    <property type="term" value="C:extracellular region"/>
    <property type="evidence" value="ECO:0007005"/>
    <property type="project" value="BHF-UCL"/>
</dbReference>
<dbReference type="GO" id="GO:0005615">
    <property type="term" value="C:extracellular space"/>
    <property type="evidence" value="ECO:0007005"/>
    <property type="project" value="UniProtKB"/>
</dbReference>
<dbReference type="GO" id="GO:0031902">
    <property type="term" value="C:late endosome membrane"/>
    <property type="evidence" value="ECO:0000314"/>
    <property type="project" value="UniProtKB"/>
</dbReference>
<dbReference type="GO" id="GO:0005811">
    <property type="term" value="C:lipid droplet"/>
    <property type="evidence" value="ECO:0000314"/>
    <property type="project" value="UniProtKB"/>
</dbReference>
<dbReference type="GO" id="GO:0005765">
    <property type="term" value="C:lysosomal membrane"/>
    <property type="evidence" value="ECO:0000314"/>
    <property type="project" value="UniProtKB"/>
</dbReference>
<dbReference type="GO" id="GO:0042470">
    <property type="term" value="C:melanosome"/>
    <property type="evidence" value="ECO:0007669"/>
    <property type="project" value="UniProtKB-SubCell"/>
</dbReference>
<dbReference type="GO" id="GO:0016020">
    <property type="term" value="C:membrane"/>
    <property type="evidence" value="ECO:0007005"/>
    <property type="project" value="UniProtKB"/>
</dbReference>
<dbReference type="GO" id="GO:0030496">
    <property type="term" value="C:midbody"/>
    <property type="evidence" value="ECO:0000314"/>
    <property type="project" value="UniProtKB"/>
</dbReference>
<dbReference type="GO" id="GO:0035749">
    <property type="term" value="C:myelin sheath adaxonal region"/>
    <property type="evidence" value="ECO:0007669"/>
    <property type="project" value="Ensembl"/>
</dbReference>
<dbReference type="GO" id="GO:0016363">
    <property type="term" value="C:nuclear matrix"/>
    <property type="evidence" value="ECO:0000303"/>
    <property type="project" value="ComplexPortal"/>
</dbReference>
<dbReference type="GO" id="GO:0005634">
    <property type="term" value="C:nucleus"/>
    <property type="evidence" value="ECO:0007005"/>
    <property type="project" value="UniProtKB"/>
</dbReference>
<dbReference type="GO" id="GO:1990667">
    <property type="term" value="C:PCSK9-AnxA2 complex"/>
    <property type="evidence" value="ECO:0000314"/>
    <property type="project" value="BHF-UCL"/>
</dbReference>
<dbReference type="GO" id="GO:0005886">
    <property type="term" value="C:plasma membrane"/>
    <property type="evidence" value="ECO:0000314"/>
    <property type="project" value="BHF-UCL"/>
</dbReference>
<dbReference type="GO" id="GO:0098797">
    <property type="term" value="C:plasma membrane protein complex"/>
    <property type="evidence" value="ECO:0000353"/>
    <property type="project" value="ComplexPortal"/>
</dbReference>
<dbReference type="GO" id="GO:0090575">
    <property type="term" value="C:RNA polymerase II transcription regulator complex"/>
    <property type="evidence" value="ECO:0000269"/>
    <property type="project" value="ComplexPortal"/>
</dbReference>
<dbReference type="GO" id="GO:0042383">
    <property type="term" value="C:sarcolemma"/>
    <property type="evidence" value="ECO:0007669"/>
    <property type="project" value="Ensembl"/>
</dbReference>
<dbReference type="GO" id="GO:0043220">
    <property type="term" value="C:Schmidt-Lanterman incisure"/>
    <property type="evidence" value="ECO:0007669"/>
    <property type="project" value="Ensembl"/>
</dbReference>
<dbReference type="GO" id="GO:0031982">
    <property type="term" value="C:vesicle"/>
    <property type="evidence" value="ECO:0007005"/>
    <property type="project" value="UniProtKB"/>
</dbReference>
<dbReference type="GO" id="GO:0012506">
    <property type="term" value="C:vesicle membrane"/>
    <property type="evidence" value="ECO:0000318"/>
    <property type="project" value="GO_Central"/>
</dbReference>
<dbReference type="GO" id="GO:0098641">
    <property type="term" value="F:cadherin binding involved in cell-cell adhesion"/>
    <property type="evidence" value="ECO:0007005"/>
    <property type="project" value="BHF-UCL"/>
</dbReference>
<dbReference type="GO" id="GO:0005509">
    <property type="term" value="F:calcium ion binding"/>
    <property type="evidence" value="ECO:0007669"/>
    <property type="project" value="InterPro"/>
</dbReference>
<dbReference type="GO" id="GO:0005544">
    <property type="term" value="F:calcium-dependent phospholipid binding"/>
    <property type="evidence" value="ECO:0000314"/>
    <property type="project" value="UniProtKB"/>
</dbReference>
<dbReference type="GO" id="GO:0048306">
    <property type="term" value="F:calcium-dependent protein binding"/>
    <property type="evidence" value="ECO:0000353"/>
    <property type="project" value="GO_Central"/>
</dbReference>
<dbReference type="GO" id="GO:0008092">
    <property type="term" value="F:cytoskeletal protein binding"/>
    <property type="evidence" value="ECO:0007669"/>
    <property type="project" value="InterPro"/>
</dbReference>
<dbReference type="GO" id="GO:0042802">
    <property type="term" value="F:identical protein binding"/>
    <property type="evidence" value="ECO:0000353"/>
    <property type="project" value="IntAct"/>
</dbReference>
<dbReference type="GO" id="GO:0005546">
    <property type="term" value="F:phosphatidylinositol-4,5-bisphosphate binding"/>
    <property type="evidence" value="ECO:0000315"/>
    <property type="project" value="UniProtKB"/>
</dbReference>
<dbReference type="GO" id="GO:0001786">
    <property type="term" value="F:phosphatidylserine binding"/>
    <property type="evidence" value="ECO:0000318"/>
    <property type="project" value="GO_Central"/>
</dbReference>
<dbReference type="GO" id="GO:0019834">
    <property type="term" value="F:phospholipase A2 inhibitor activity"/>
    <property type="evidence" value="ECO:0000314"/>
    <property type="project" value="UniProtKB"/>
</dbReference>
<dbReference type="GO" id="GO:0002020">
    <property type="term" value="F:protease binding"/>
    <property type="evidence" value="ECO:0000353"/>
    <property type="project" value="BHF-UCL"/>
</dbReference>
<dbReference type="GO" id="GO:0003723">
    <property type="term" value="F:RNA binding"/>
    <property type="evidence" value="ECO:0007005"/>
    <property type="project" value="UniProtKB"/>
</dbReference>
<dbReference type="GO" id="GO:0044548">
    <property type="term" value="F:S100 protein binding"/>
    <property type="evidence" value="ECO:0000353"/>
    <property type="project" value="UniProtKB"/>
</dbReference>
<dbReference type="GO" id="GO:0004867">
    <property type="term" value="F:serine-type endopeptidase inhibitor activity"/>
    <property type="evidence" value="ECO:0000314"/>
    <property type="project" value="BHF-UCL"/>
</dbReference>
<dbReference type="GO" id="GO:0001525">
    <property type="term" value="P:angiogenesis"/>
    <property type="evidence" value="ECO:0000270"/>
    <property type="project" value="UniProtKB"/>
</dbReference>
<dbReference type="GO" id="GO:0007160">
    <property type="term" value="P:cell-matrix adhesion"/>
    <property type="evidence" value="ECO:0007669"/>
    <property type="project" value="Ensembl"/>
</dbReference>
<dbReference type="GO" id="GO:0030199">
    <property type="term" value="P:collagen fibril organization"/>
    <property type="evidence" value="ECO:0007669"/>
    <property type="project" value="Ensembl"/>
</dbReference>
<dbReference type="GO" id="GO:1904019">
    <property type="term" value="P:epithelial cell apoptotic process"/>
    <property type="evidence" value="ECO:0007669"/>
    <property type="project" value="Ensembl"/>
</dbReference>
<dbReference type="GO" id="GO:0042730">
    <property type="term" value="P:fibrinolysis"/>
    <property type="evidence" value="ECO:0007669"/>
    <property type="project" value="Ensembl"/>
</dbReference>
<dbReference type="GO" id="GO:0030324">
    <property type="term" value="P:lung development"/>
    <property type="evidence" value="ECO:0007669"/>
    <property type="project" value="Ensembl"/>
</dbReference>
<dbReference type="GO" id="GO:0001765">
    <property type="term" value="P:membrane raft assembly"/>
    <property type="evidence" value="ECO:0000315"/>
    <property type="project" value="UniProtKB"/>
</dbReference>
<dbReference type="GO" id="GO:0042789">
    <property type="term" value="P:mRNA transcription by RNA polymerase II"/>
    <property type="evidence" value="ECO:0000266"/>
    <property type="project" value="ComplexPortal"/>
</dbReference>
<dbReference type="GO" id="GO:0032804">
    <property type="term" value="P:negative regulation of low-density lipoprotein particle receptor catabolic process"/>
    <property type="evidence" value="ECO:0000314"/>
    <property type="project" value="BHF-UCL"/>
</dbReference>
<dbReference type="GO" id="GO:0002091">
    <property type="term" value="P:negative regulation of receptor internalization"/>
    <property type="evidence" value="ECO:0000314"/>
    <property type="project" value="ComplexPortal"/>
</dbReference>
<dbReference type="GO" id="GO:0036035">
    <property type="term" value="P:osteoclast development"/>
    <property type="evidence" value="ECO:0000314"/>
    <property type="project" value="UniProtKB"/>
</dbReference>
<dbReference type="GO" id="GO:0045921">
    <property type="term" value="P:positive regulation of exocytosis"/>
    <property type="evidence" value="ECO:0000303"/>
    <property type="project" value="ComplexPortal"/>
</dbReference>
<dbReference type="GO" id="GO:1905581">
    <property type="term" value="P:positive regulation of low-density lipoprotein particle clearance"/>
    <property type="evidence" value="ECO:0000314"/>
    <property type="project" value="BHF-UCL"/>
</dbReference>
<dbReference type="GO" id="GO:1905686">
    <property type="term" value="P:positive regulation of plasma membrane repair"/>
    <property type="evidence" value="ECO:0000303"/>
    <property type="project" value="ComplexPortal"/>
</dbReference>
<dbReference type="GO" id="GO:0010756">
    <property type="term" value="P:positive regulation of plasminogen activation"/>
    <property type="evidence" value="ECO:0000314"/>
    <property type="project" value="ComplexPortal"/>
</dbReference>
<dbReference type="GO" id="GO:0001921">
    <property type="term" value="P:positive regulation of receptor recycling"/>
    <property type="evidence" value="ECO:0000314"/>
    <property type="project" value="BHF-UCL"/>
</dbReference>
<dbReference type="GO" id="GO:1905602">
    <property type="term" value="P:positive regulation of receptor-mediated endocytosis involved in cholesterol transport"/>
    <property type="evidence" value="ECO:0000314"/>
    <property type="project" value="BHF-UCL"/>
</dbReference>
<dbReference type="GO" id="GO:0045944">
    <property type="term" value="P:positive regulation of transcription by RNA polymerase II"/>
    <property type="evidence" value="ECO:0000266"/>
    <property type="project" value="ComplexPortal"/>
</dbReference>
<dbReference type="GO" id="GO:0044090">
    <property type="term" value="P:positive regulation of vacuole organization"/>
    <property type="evidence" value="ECO:0000315"/>
    <property type="project" value="AgBase"/>
</dbReference>
<dbReference type="GO" id="GO:0031340">
    <property type="term" value="P:positive regulation of vesicle fusion"/>
    <property type="evidence" value="ECO:0000314"/>
    <property type="project" value="UniProtKB"/>
</dbReference>
<dbReference type="GO" id="GO:0050767">
    <property type="term" value="P:regulation of neurogenesis"/>
    <property type="evidence" value="ECO:0000266"/>
    <property type="project" value="ComplexPortal"/>
</dbReference>
<dbReference type="GO" id="GO:0014823">
    <property type="term" value="P:response to activity"/>
    <property type="evidence" value="ECO:0007669"/>
    <property type="project" value="Ensembl"/>
</dbReference>
<dbReference type="GO" id="GO:0006900">
    <property type="term" value="P:vesicle budding from membrane"/>
    <property type="evidence" value="ECO:0000315"/>
    <property type="project" value="UniProtKB"/>
</dbReference>
<dbReference type="DisProt" id="DP02735"/>
<dbReference type="FunFam" id="1.10.220.10:FF:000001">
    <property type="entry name" value="Annexin"/>
    <property type="match status" value="1"/>
</dbReference>
<dbReference type="FunFam" id="1.10.220.10:FF:000002">
    <property type="entry name" value="Annexin"/>
    <property type="match status" value="1"/>
</dbReference>
<dbReference type="FunFam" id="1.10.220.10:FF:000003">
    <property type="entry name" value="Annexin"/>
    <property type="match status" value="1"/>
</dbReference>
<dbReference type="FunFam" id="1.10.220.10:FF:000007">
    <property type="entry name" value="Annexin"/>
    <property type="match status" value="1"/>
</dbReference>
<dbReference type="Gene3D" id="1.10.220.10">
    <property type="entry name" value="Annexin"/>
    <property type="match status" value="4"/>
</dbReference>
<dbReference type="IDEAL" id="IID00700"/>
<dbReference type="InterPro" id="IPR001464">
    <property type="entry name" value="Annexin"/>
</dbReference>
<dbReference type="InterPro" id="IPR018502">
    <property type="entry name" value="Annexin_repeat"/>
</dbReference>
<dbReference type="InterPro" id="IPR018252">
    <property type="entry name" value="Annexin_repeat_CS"/>
</dbReference>
<dbReference type="InterPro" id="IPR037104">
    <property type="entry name" value="Annexin_sf"/>
</dbReference>
<dbReference type="InterPro" id="IPR002389">
    <property type="entry name" value="ANX2"/>
</dbReference>
<dbReference type="PANTHER" id="PTHR10502">
    <property type="entry name" value="ANNEXIN"/>
    <property type="match status" value="1"/>
</dbReference>
<dbReference type="PANTHER" id="PTHR10502:SF18">
    <property type="entry name" value="ANNEXIN A2-RELATED"/>
    <property type="match status" value="1"/>
</dbReference>
<dbReference type="Pfam" id="PF00191">
    <property type="entry name" value="Annexin"/>
    <property type="match status" value="4"/>
</dbReference>
<dbReference type="PRINTS" id="PR00196">
    <property type="entry name" value="ANNEXIN"/>
</dbReference>
<dbReference type="PRINTS" id="PR00198">
    <property type="entry name" value="ANNEXINII"/>
</dbReference>
<dbReference type="SMART" id="SM00335">
    <property type="entry name" value="ANX"/>
    <property type="match status" value="4"/>
</dbReference>
<dbReference type="SUPFAM" id="SSF47874">
    <property type="entry name" value="Annexin"/>
    <property type="match status" value="1"/>
</dbReference>
<dbReference type="PROSITE" id="PS00223">
    <property type="entry name" value="ANNEXIN_1"/>
    <property type="match status" value="4"/>
</dbReference>
<dbReference type="PROSITE" id="PS51897">
    <property type="entry name" value="ANNEXIN_2"/>
    <property type="match status" value="4"/>
</dbReference>
<organism>
    <name type="scientific">Homo sapiens</name>
    <name type="common">Human</name>
    <dbReference type="NCBI Taxonomy" id="9606"/>
    <lineage>
        <taxon>Eukaryota</taxon>
        <taxon>Metazoa</taxon>
        <taxon>Chordata</taxon>
        <taxon>Craniata</taxon>
        <taxon>Vertebrata</taxon>
        <taxon>Euteleostomi</taxon>
        <taxon>Mammalia</taxon>
        <taxon>Eutheria</taxon>
        <taxon>Euarchontoglires</taxon>
        <taxon>Primates</taxon>
        <taxon>Haplorrhini</taxon>
        <taxon>Catarrhini</taxon>
        <taxon>Hominidae</taxon>
        <taxon>Homo</taxon>
    </lineage>
</organism>
<keyword id="KW-0002">3D-structure</keyword>
<keyword id="KW-0007">Acetylation</keyword>
<keyword id="KW-0025">Alternative splicing</keyword>
<keyword id="KW-0041">Annexin</keyword>
<keyword id="KW-0084">Basement membrane</keyword>
<keyword id="KW-0106">Calcium</keyword>
<keyword id="KW-0111">Calcium/phospholipid-binding</keyword>
<keyword id="KW-0903">Direct protein sequencing</keyword>
<keyword id="KW-0272">Extracellular matrix</keyword>
<keyword id="KW-0945">Host-virus interaction</keyword>
<keyword id="KW-1017">Isopeptide bond</keyword>
<keyword id="KW-0597">Phosphoprotein</keyword>
<keyword id="KW-1267">Proteomics identification</keyword>
<keyword id="KW-1185">Reference proteome</keyword>
<keyword id="KW-0677">Repeat</keyword>
<keyword id="KW-0694">RNA-binding</keyword>
<keyword id="KW-0964">Secreted</keyword>
<keyword id="KW-0832">Ubl conjugation</keyword>
<proteinExistence type="evidence at protein level"/>
<protein>
    <recommendedName>
        <fullName>Annexin A2</fullName>
    </recommendedName>
    <alternativeName>
        <fullName>Annexin II</fullName>
    </alternativeName>
    <alternativeName>
        <fullName>Annexin-2</fullName>
    </alternativeName>
    <alternativeName>
        <fullName>Calpactin I heavy chain</fullName>
    </alternativeName>
    <alternativeName>
        <fullName>Calpactin-1 heavy chain</fullName>
    </alternativeName>
    <alternativeName>
        <fullName>Chromobindin-8</fullName>
    </alternativeName>
    <alternativeName>
        <fullName>Lipocortin II</fullName>
    </alternativeName>
    <alternativeName>
        <fullName>Placental anticoagulant protein IV</fullName>
        <shortName>PAP-IV</shortName>
    </alternativeName>
    <alternativeName>
        <fullName>Protein I</fullName>
    </alternativeName>
    <alternativeName>
        <fullName>p36</fullName>
    </alternativeName>
</protein>
<evidence type="ECO:0000250" key="1">
    <source>
        <dbReference type="UniProtKB" id="A2SW69"/>
    </source>
</evidence>
<evidence type="ECO:0000250" key="2">
    <source>
        <dbReference type="UniProtKB" id="P07356"/>
    </source>
</evidence>
<evidence type="ECO:0000250" key="3">
    <source>
        <dbReference type="UniProtKB" id="Q6TEQ7"/>
    </source>
</evidence>
<evidence type="ECO:0000255" key="4"/>
<evidence type="ECO:0000255" key="5">
    <source>
        <dbReference type="PROSITE-ProRule" id="PRU01245"/>
    </source>
</evidence>
<evidence type="ECO:0000269" key="6">
    <source>
    </source>
</evidence>
<evidence type="ECO:0000269" key="7">
    <source>
    </source>
</evidence>
<evidence type="ECO:0000269" key="8">
    <source>
    </source>
</evidence>
<evidence type="ECO:0000269" key="9">
    <source>
    </source>
</evidence>
<evidence type="ECO:0000269" key="10">
    <source>
    </source>
</evidence>
<evidence type="ECO:0000269" key="11">
    <source>
    </source>
</evidence>
<evidence type="ECO:0000269" key="12">
    <source>
    </source>
</evidence>
<evidence type="ECO:0000269" key="13">
    <source>
    </source>
</evidence>
<evidence type="ECO:0000269" key="14">
    <source>
    </source>
</evidence>
<evidence type="ECO:0000269" key="15">
    <source>
    </source>
</evidence>
<evidence type="ECO:0000269" key="16">
    <source>
    </source>
</evidence>
<evidence type="ECO:0000269" key="17">
    <source>
    </source>
</evidence>
<evidence type="ECO:0000269" key="18">
    <source>
    </source>
</evidence>
<evidence type="ECO:0000269" key="19">
    <source>
    </source>
</evidence>
<evidence type="ECO:0000269" key="20">
    <source>
    </source>
</evidence>
<evidence type="ECO:0000269" key="21">
    <source ref="7"/>
</evidence>
<evidence type="ECO:0000303" key="22">
    <source>
    </source>
</evidence>
<evidence type="ECO:0000305" key="23"/>
<evidence type="ECO:0007744" key="24">
    <source>
        <dbReference type="PDB" id="5LPU"/>
    </source>
</evidence>
<evidence type="ECO:0007744" key="25">
    <source>
        <dbReference type="PDB" id="5LPX"/>
    </source>
</evidence>
<evidence type="ECO:0007744" key="26">
    <source>
        <dbReference type="PDB" id="5LQ0"/>
    </source>
</evidence>
<evidence type="ECO:0007744" key="27">
    <source>
        <dbReference type="PDB" id="5LQ2"/>
    </source>
</evidence>
<evidence type="ECO:0007744" key="28">
    <source>
    </source>
</evidence>
<evidence type="ECO:0007744" key="29">
    <source>
    </source>
</evidence>
<evidence type="ECO:0007744" key="30">
    <source>
    </source>
</evidence>
<evidence type="ECO:0007829" key="31">
    <source>
        <dbReference type="PDB" id="1W7B"/>
    </source>
</evidence>
<evidence type="ECO:0007829" key="32">
    <source>
        <dbReference type="PDB" id="2HYV"/>
    </source>
</evidence>
<evidence type="ECO:0007829" key="33">
    <source>
        <dbReference type="PDB" id="5LPU"/>
    </source>
</evidence>
<evidence type="ECO:0007829" key="34">
    <source>
        <dbReference type="PDB" id="5N7D"/>
    </source>
</evidence>
<evidence type="ECO:0007829" key="35">
    <source>
        <dbReference type="PDB" id="7DTO"/>
    </source>
</evidence>
<evidence type="ECO:0007829" key="36">
    <source>
        <dbReference type="PDB" id="7QQM"/>
    </source>
</evidence>
<reference key="1">
    <citation type="journal article" date="1986" name="Cell">
        <title>Two human 35 kd inhibitors of phospholipase A2 are related to substrates of pp60v-src and of the epidermal growth factor receptor/kinase.</title>
        <authorList>
            <person name="Huang K.-S."/>
            <person name="Wallner B.P."/>
            <person name="Mattaliano R.J."/>
            <person name="Tizard R."/>
            <person name="Burne C."/>
            <person name="Frey A."/>
            <person name="Hession C."/>
            <person name="McGray P."/>
            <person name="Sinclair L.K."/>
            <person name="Chow E.P."/>
            <person name="Browning J.L."/>
            <person name="Ramachandran K.L."/>
            <person name="Tang J."/>
            <person name="Smart J.E."/>
            <person name="Pepinsky R.B."/>
        </authorList>
    </citation>
    <scope>NUCLEOTIDE SEQUENCE [MRNA] (ISOFORM 1)</scope>
    <source>
        <tissue>Placenta</tissue>
    </source>
</reference>
<reference key="2">
    <citation type="journal article" date="1990" name="Gene">
        <title>Characterization of the human lipocortin-2-encoding multigene family: its structure suggests the existence of a short amino acid unit undergoing duplication.</title>
        <authorList>
            <person name="Spano F."/>
            <person name="Raugei G."/>
            <person name="Palla E."/>
            <person name="Colella C."/>
            <person name="Melli M."/>
        </authorList>
    </citation>
    <scope>NUCLEOTIDE SEQUENCE [MRNA] (ISOFORM 1)</scope>
</reference>
<reference key="3">
    <citation type="submission" date="2003-05" db="EMBL/GenBank/DDBJ databases">
        <title>Cloning of human full-length CDSs in BD Creator(TM) system donor vector.</title>
        <authorList>
            <person name="Kalnine N."/>
            <person name="Chen X."/>
            <person name="Rolfs A."/>
            <person name="Halleck A."/>
            <person name="Hines L."/>
            <person name="Eisenstein S."/>
            <person name="Koundinya M."/>
            <person name="Raphael J."/>
            <person name="Moreira D."/>
            <person name="Kelley T."/>
            <person name="LaBaer J."/>
            <person name="Lin Y."/>
            <person name="Phelan M."/>
            <person name="Farmer A."/>
        </authorList>
    </citation>
    <scope>NUCLEOTIDE SEQUENCE [LARGE SCALE MRNA] (ISOFORM 1)</scope>
</reference>
<reference key="4">
    <citation type="journal article" date="2007" name="BMC Genomics">
        <title>The full-ORF clone resource of the German cDNA consortium.</title>
        <authorList>
            <person name="Bechtel S."/>
            <person name="Rosenfelder H."/>
            <person name="Duda A."/>
            <person name="Schmidt C.P."/>
            <person name="Ernst U."/>
            <person name="Wellenreuther R."/>
            <person name="Mehrle A."/>
            <person name="Schuster C."/>
            <person name="Bahr A."/>
            <person name="Bloecker H."/>
            <person name="Heubner D."/>
            <person name="Hoerlein A."/>
            <person name="Michel G."/>
            <person name="Wedler H."/>
            <person name="Koehrer K."/>
            <person name="Ottenwaelder B."/>
            <person name="Poustka A."/>
            <person name="Wiemann S."/>
            <person name="Schupp I."/>
        </authorList>
    </citation>
    <scope>NUCLEOTIDE SEQUENCE [LARGE SCALE MRNA] (ISOFORM 2)</scope>
    <source>
        <tissue>Colon endothelium</tissue>
    </source>
</reference>
<reference key="5">
    <citation type="journal article" date="2006" name="Nature">
        <title>Analysis of the DNA sequence and duplication history of human chromosome 15.</title>
        <authorList>
            <person name="Zody M.C."/>
            <person name="Garber M."/>
            <person name="Sharpe T."/>
            <person name="Young S.K."/>
            <person name="Rowen L."/>
            <person name="O'Neill K."/>
            <person name="Whittaker C.A."/>
            <person name="Kamal M."/>
            <person name="Chang J.L."/>
            <person name="Cuomo C.A."/>
            <person name="Dewar K."/>
            <person name="FitzGerald M.G."/>
            <person name="Kodira C.D."/>
            <person name="Madan A."/>
            <person name="Qin S."/>
            <person name="Yang X."/>
            <person name="Abbasi N."/>
            <person name="Abouelleil A."/>
            <person name="Arachchi H.M."/>
            <person name="Baradarani L."/>
            <person name="Birditt B."/>
            <person name="Bloom S."/>
            <person name="Bloom T."/>
            <person name="Borowsky M.L."/>
            <person name="Burke J."/>
            <person name="Butler J."/>
            <person name="Cook A."/>
            <person name="DeArellano K."/>
            <person name="DeCaprio D."/>
            <person name="Dorris L. III"/>
            <person name="Dors M."/>
            <person name="Eichler E.E."/>
            <person name="Engels R."/>
            <person name="Fahey J."/>
            <person name="Fleetwood P."/>
            <person name="Friedman C."/>
            <person name="Gearin G."/>
            <person name="Hall J.L."/>
            <person name="Hensley G."/>
            <person name="Johnson E."/>
            <person name="Jones C."/>
            <person name="Kamat A."/>
            <person name="Kaur A."/>
            <person name="Locke D.P."/>
            <person name="Madan A."/>
            <person name="Munson G."/>
            <person name="Jaffe D.B."/>
            <person name="Lui A."/>
            <person name="Macdonald P."/>
            <person name="Mauceli E."/>
            <person name="Naylor J.W."/>
            <person name="Nesbitt R."/>
            <person name="Nicol R."/>
            <person name="O'Leary S.B."/>
            <person name="Ratcliffe A."/>
            <person name="Rounsley S."/>
            <person name="She X."/>
            <person name="Sneddon K.M.B."/>
            <person name="Stewart S."/>
            <person name="Sougnez C."/>
            <person name="Stone S.M."/>
            <person name="Topham K."/>
            <person name="Vincent D."/>
            <person name="Wang S."/>
            <person name="Zimmer A.R."/>
            <person name="Birren B.W."/>
            <person name="Hood L."/>
            <person name="Lander E.S."/>
            <person name="Nusbaum C."/>
        </authorList>
    </citation>
    <scope>NUCLEOTIDE SEQUENCE [LARGE SCALE GENOMIC DNA]</scope>
</reference>
<reference key="6">
    <citation type="journal article" date="2004" name="Genome Res.">
        <title>The status, quality, and expansion of the NIH full-length cDNA project: the Mammalian Gene Collection (MGC).</title>
        <authorList>
            <consortium name="The MGC Project Team"/>
        </authorList>
    </citation>
    <scope>NUCLEOTIDE SEQUENCE [LARGE SCALE MRNA] (ISOFORM 1)</scope>
    <scope>VARIANT LEU-98</scope>
    <source>
        <tissue>Brain</tissue>
        <tissue>Colon</tissue>
        <tissue>Pancreas</tissue>
        <tissue>Prostate</tissue>
        <tissue>Skin</tissue>
        <tissue>Testis</tissue>
        <tissue>Urinary bladder</tissue>
    </source>
</reference>
<reference key="7">
    <citation type="submission" date="2008-02" db="UniProtKB">
        <authorList>
            <person name="Bienvenut W.V."/>
            <person name="Murray L."/>
            <person name="Brunton V.G."/>
            <person name="Frame M.C."/>
            <person name="Bensaad K."/>
            <person name="Vousden K.H."/>
        </authorList>
    </citation>
    <scope>PROTEIN SEQUENCE OF 2-10; 38-47; 50-63; 69-77; 89-115; 153-169 AND 213-220</scope>
    <scope>CLEAVAGE OF INITIATOR METHIONINE</scope>
    <scope>ACETYLATION AT SER-2</scope>
    <scope>IDENTIFICATION BY MASS SPECTROMETRY</scope>
    <source>
        <tissue>Colon adenocarcinoma</tissue>
        <tissue>Osteosarcoma</tissue>
    </source>
</reference>
<reference key="8">
    <citation type="journal article" date="1991" name="J. Biol. Chem.">
        <title>The protein-tyrosine kinase substrate, calpactin I heavy chain (p36), is part of the primer recognition protein complex that interacts with DNA polymerase alpha.</title>
        <authorList>
            <person name="Jindal H.K."/>
            <person name="Chaney W.G."/>
            <person name="Anderson C.W."/>
            <person name="Davis R.G."/>
            <person name="Vishwanatha J.K."/>
        </authorList>
    </citation>
    <scope>PROTEIN SEQUENCE OF 11-27; 49-62; 68-77; 120-135; 314-323 AND 329-339</scope>
</reference>
<reference key="9">
    <citation type="journal article" date="1994" name="Biochemistry">
        <title>Identification and characterization of alpha-protein kinase C binding proteins in normal and transformed REF52 cells.</title>
        <authorList>
            <person name="Hyatt S.L."/>
            <person name="Liao L."/>
            <person name="Chapline C."/>
            <person name="Jaken S."/>
        </authorList>
    </citation>
    <scope>PROTEIN SEQUENCE OF 15-40 AND 50-63</scope>
</reference>
<reference key="10">
    <citation type="journal article" date="1994" name="Biochem. Biophys. Res. Commun.">
        <title>An endothelial cell-surface form of annexin II binds human cytomegalovirus.</title>
        <authorList>
            <person name="Wright J.F."/>
            <person name="Kurosky A."/>
            <person name="Wasi S."/>
        </authorList>
    </citation>
    <scope>PROTEIN SEQUENCE OF 18-37; 119-126; 172-191 AND 301-307</scope>
    <scope>INTERACTION WITH HCMV (MICROBIAL INFECTION)</scope>
    <source>
        <tissue>Umbilical vein endothelial cell</tissue>
    </source>
</reference>
<reference key="11">
    <citation type="journal article" date="1993" name="J. Cell Biol.">
        <title>Annexin II is a major component of fusogenic endosomal vesicles.</title>
        <authorList>
            <person name="Emans N."/>
            <person name="Gorvel J.P."/>
            <person name="Walter C."/>
            <person name="Gerke V."/>
            <person name="Kellner R."/>
            <person name="Griffiths G."/>
            <person name="Gruenberg J."/>
        </authorList>
    </citation>
    <scope>PROTEIN SEQUENCE OF 234-241 AND 252-261</scope>
</reference>
<reference key="12">
    <citation type="journal article" date="1986" name="Mol. Cell. Biol.">
        <title>The protein-tyrosine kinase substrate p36 is also a substrate for protein kinase C in vitro and in vivo.</title>
        <authorList>
            <person name="Gould K.L."/>
            <person name="Woodgett J.R."/>
            <person name="Isacke C.M."/>
            <person name="Hunter T."/>
        </authorList>
    </citation>
    <scope>PHOSPHORYLATION AT SER-26</scope>
</reference>
<reference key="13">
    <citation type="journal article" date="2003" name="J. Biol. Chem.">
        <title>CEACAM1, a cell-cell adhesion molecule, directly associates with annexin II in a three-dimensional model of mammary morphogenesis.</title>
        <authorList>
            <person name="Kirshner J."/>
            <person name="Schumann D."/>
            <person name="Shively J.E."/>
        </authorList>
    </citation>
    <scope>INTERACTION WITH CEACAM1</scope>
</reference>
<reference key="14">
    <citation type="journal article" date="2003" name="Nature">
        <title>Proteomic characterization of the human centrosome by protein correlation profiling.</title>
        <authorList>
            <person name="Andersen J.S."/>
            <person name="Wilkinson C.J."/>
            <person name="Mayor T."/>
            <person name="Mortensen P."/>
            <person name="Nigg E.A."/>
            <person name="Mann M."/>
        </authorList>
    </citation>
    <scope>IDENTIFICATION BY MASS SPECTROMETRY</scope>
    <source>
        <tissue>Lymphoblast</tissue>
    </source>
</reference>
<reference key="15">
    <citation type="journal article" date="2004" name="J. Biol. Chem.">
        <title>An annexin 2 phosphorylation switch mediates p11-dependent translocation of annexin 2 to the cell surface.</title>
        <authorList>
            <person name="Deora A.B."/>
            <person name="Kreitzer G."/>
            <person name="Jacovina A.T."/>
            <person name="Hajjar K.A."/>
        </authorList>
    </citation>
    <scope>PHOSPHORYLATION AT TYR-24</scope>
    <scope>MUTAGENESIS OF TYR-24</scope>
</reference>
<reference key="16">
    <citation type="journal article" date="2005" name="Biochem. Biophys. Res. Commun.">
        <title>Proteomic identification of proteins conjugated to ISG15 in mouse and human cells.</title>
        <authorList>
            <person name="Giannakopoulos N.V."/>
            <person name="Luo J.K."/>
            <person name="Papov V."/>
            <person name="Zou W."/>
            <person name="Lenschow D.J."/>
            <person name="Jacobs B.S."/>
            <person name="Borden E.C."/>
            <person name="Li J."/>
            <person name="Virgin H.W."/>
            <person name="Zhang D.E."/>
        </authorList>
    </citation>
    <scope>ISGYLATION</scope>
</reference>
<reference key="17">
    <citation type="journal article" date="2006" name="J. Proteome Res.">
        <title>Proteomic and bioinformatic characterization of the biogenesis and function of melanosomes.</title>
        <authorList>
            <person name="Chi A."/>
            <person name="Valencia J.C."/>
            <person name="Hu Z.-Z."/>
            <person name="Watabe H."/>
            <person name="Yamaguchi H."/>
            <person name="Mangini N.J."/>
            <person name="Huang H."/>
            <person name="Canfield V.A."/>
            <person name="Cheng K.C."/>
            <person name="Yang F."/>
            <person name="Abe R."/>
            <person name="Yamagishi S."/>
            <person name="Shabanowitz J."/>
            <person name="Hearing V.J."/>
            <person name="Wu C."/>
            <person name="Appella E."/>
            <person name="Hunt D.F."/>
        </authorList>
    </citation>
    <scope>SUBCELLULAR LOCATION [LARGE SCALE ANALYSIS]</scope>
    <source>
        <tissue>Melanoma</tissue>
    </source>
</reference>
<reference key="18">
    <citation type="journal article" date="2008" name="J. Biol. Chem.">
        <title>Annexin A2 is a C-terminal PCSK9-binding protein that regulates endogenous low density lipoprotein receptor levels.</title>
        <authorList>
            <person name="Mayer G."/>
            <person name="Poirier S."/>
            <person name="Seidah N.G."/>
        </authorList>
    </citation>
    <scope>FUNCTION</scope>
    <scope>INTERACTION WITH PCSK9</scope>
    <scope>MUTAGENESIS OF 77-ARG--LYS-81; 80-LYS--ALA-84 AND LYS-88</scope>
</reference>
<reference key="19">
    <citation type="journal article" date="2011" name="BMC Syst. Biol.">
        <title>Initial characterization of the human central proteome.</title>
        <authorList>
            <person name="Burkard T.R."/>
            <person name="Planyavsky M."/>
            <person name="Kaupe I."/>
            <person name="Breitwieser F.P."/>
            <person name="Buerckstuemmer T."/>
            <person name="Bennett K.L."/>
            <person name="Superti-Furga G."/>
            <person name="Colinge J."/>
        </authorList>
    </citation>
    <scope>IDENTIFICATION BY MASS SPECTROMETRY [LARGE SCALE ANALYSIS]</scope>
</reference>
<reference key="20">
    <citation type="journal article" date="2011" name="PLoS ONE">
        <title>Cochlin induced TREK-1 co-expression and annexin A2 secretion: role in trabecular meshwork cell elongation and motility.</title>
        <authorList>
            <person name="Goel M."/>
            <person name="Sienkiewicz A.E."/>
            <person name="Picciani R."/>
            <person name="Lee R.K."/>
            <person name="Bhattacharya S.K."/>
        </authorList>
    </citation>
    <scope>INTERACTION WITH COCH</scope>
</reference>
<reference key="21">
    <citation type="journal article" date="2012" name="PLoS ONE">
        <title>Annexin A2 is a natural extrahepatic inhibitor of the PCSK9-induced LDL receptor degradation.</title>
        <authorList>
            <person name="Seidah N.G."/>
            <person name="Poirier S."/>
            <person name="Denis M."/>
            <person name="Parker R."/>
            <person name="Miao B."/>
            <person name="Mapelli C."/>
            <person name="Prat A."/>
            <person name="Wassef H."/>
            <person name="Davignon J."/>
            <person name="Hajjar K.A."/>
            <person name="Mayer G."/>
        </authorList>
    </citation>
    <scope>FUNCTION</scope>
    <scope>VARIANT LEU-98</scope>
    <scope>CHARACTERIZATION OF VARIANT LEU-98</scope>
    <scope>MUTAGENESIS OF 28-LYS--GLU-36; 37-ARG--LYS-47; 77-ARG--LYS-80 AND 77-ARG--LYS-81</scope>
</reference>
<reference key="22">
    <citation type="journal article" date="2013" name="J. Proteome Res.">
        <title>Toward a comprehensive characterization of a human cancer cell phosphoproteome.</title>
        <authorList>
            <person name="Zhou H."/>
            <person name="Di Palma S."/>
            <person name="Preisinger C."/>
            <person name="Peng M."/>
            <person name="Polat A.N."/>
            <person name="Heck A.J."/>
            <person name="Mohammed S."/>
        </authorList>
    </citation>
    <scope>PHOSPHORYLATION [LARGE SCALE ANALYSIS] AT SER-184</scope>
    <scope>IDENTIFICATION BY MASS SPECTROMETRY [LARGE SCALE ANALYSIS]</scope>
    <source>
        <tissue>Cervix carcinoma</tissue>
    </source>
</reference>
<reference key="23">
    <citation type="journal article" date="2014" name="J. Biol. Chem.">
        <title>Annexin A2 reduces PCSK9 protein levels via a translational mechanism and interacts with the M1 and M2 domains of PCSK9.</title>
        <authorList>
            <person name="Ly K."/>
            <person name="Saavedra Y.G."/>
            <person name="Canuel M."/>
            <person name="Routhier S."/>
            <person name="Desjardins R."/>
            <person name="Hamelin J."/>
            <person name="Mayne J."/>
            <person name="Lazure C."/>
            <person name="Seidah N.G."/>
            <person name="Day R."/>
        </authorList>
    </citation>
    <scope>FUNCTION</scope>
    <scope>INTERACTION WITH PCSK9</scope>
    <scope>RNA-BINDING</scope>
</reference>
<reference key="24">
    <citation type="journal article" date="2014" name="J. Proteomics">
        <title>An enzyme assisted RP-RPLC approach for in-depth analysis of human liver phosphoproteome.</title>
        <authorList>
            <person name="Bian Y."/>
            <person name="Song C."/>
            <person name="Cheng K."/>
            <person name="Dong M."/>
            <person name="Wang F."/>
            <person name="Huang J."/>
            <person name="Sun D."/>
            <person name="Wang L."/>
            <person name="Ye M."/>
            <person name="Zou H."/>
        </authorList>
    </citation>
    <scope>IDENTIFICATION BY MASS SPECTROMETRY [LARGE SCALE ANALYSIS]</scope>
    <source>
        <tissue>Liver</tissue>
    </source>
</reference>
<reference key="25">
    <citation type="journal article" date="2014" name="Proc. Natl. Acad. Sci. U.S.A.">
        <title>Mapping of SUMO sites and analysis of SUMOylation changes induced by external stimuli.</title>
        <authorList>
            <person name="Impens F."/>
            <person name="Radoshevich L."/>
            <person name="Cossart P."/>
            <person name="Ribet D."/>
        </authorList>
    </citation>
    <scope>SUMOYLATION [LARGE SCALE ANALYSIS] AT LYS-49</scope>
    <scope>IDENTIFICATION BY MASS SPECTROMETRY [LARGE SCALE ANALYSIS]</scope>
</reference>
<reference key="26">
    <citation type="journal article" date="2014" name="MBio">
        <title>Annexin A2 mediates Mycoplasma pneumoniae community-acquired respiratory distress syndrome toxin binding to eukaryotic cells.</title>
        <authorList>
            <person name="Somarajan S.R."/>
            <person name="Al-Asadi F."/>
            <person name="Ramasamy K."/>
            <person name="Pandranki L."/>
            <person name="Baseman J.B."/>
            <person name="Kannan T.R."/>
        </authorList>
    </citation>
    <scope>FUNCTION (MICROBIAL INFECTION)</scope>
    <scope>INTERACTION WITH M.PNEUMONIAE CARDS TOXIN</scope>
</reference>
<reference key="27">
    <citation type="journal article" date="2015" name="Proteomics">
        <title>N-terminome analysis of the human mitochondrial proteome.</title>
        <authorList>
            <person name="Vaca Jacome A.S."/>
            <person name="Rabilloud T."/>
            <person name="Schaeffer-Reiss C."/>
            <person name="Rompais M."/>
            <person name="Ayoub D."/>
            <person name="Lane L."/>
            <person name="Bairoch A."/>
            <person name="Van Dorsselaer A."/>
            <person name="Carapito C."/>
        </authorList>
    </citation>
    <scope>IDENTIFICATION BY MASS SPECTROMETRY [LARGE SCALE ANALYSIS]</scope>
</reference>
<reference key="28">
    <citation type="journal article" date="2016" name="Oncotarget">
        <title>UBAP2 negatively regulates the invasion of hepatocellular carcinoma cell by ubiquitinating and degradating Annexin A2.</title>
        <authorList>
            <person name="Bai D.S."/>
            <person name="Wu C."/>
            <person name="Yang L.X."/>
            <person name="Zhang C."/>
            <person name="Zhang P.F."/>
            <person name="He Y.Z."/>
            <person name="Cai J.B."/>
            <person name="Song Z.J."/>
            <person name="Dong Z.R."/>
            <person name="Huang X.Y."/>
            <person name="Ke A.W."/>
            <person name="Shi G.M."/>
        </authorList>
    </citation>
    <scope>INTERACTION WITH UBAP2</scope>
    <scope>IDENTIFICATION BY MASS SPECTROMETRY</scope>
    <scope>INVOLVEMENT IN HEPATOCELLULAR CARCINOMA</scope>
</reference>
<reference key="29">
    <citation type="journal article" date="2017" name="Nat. Struct. Mol. Biol.">
        <title>Site-specific mapping of the human SUMO proteome reveals co-modification with phosphorylation.</title>
        <authorList>
            <person name="Hendriks I.A."/>
            <person name="Lyon D."/>
            <person name="Young C."/>
            <person name="Jensen L.J."/>
            <person name="Vertegaal A.C."/>
            <person name="Nielsen M.L."/>
        </authorList>
    </citation>
    <scope>SUMOYLATION [LARGE SCALE ANALYSIS] AT LYS-49</scope>
    <scope>IDENTIFICATION BY MASS SPECTROMETRY [LARGE SCALE ANALYSIS]</scope>
</reference>
<reference key="30">
    <citation type="journal article" date="2021" name="J. Cell Sci.">
        <title>PLEKHG4B enables actin cytoskeletal remodeling during epithelial cell-cell junction formation.</title>
        <authorList>
            <person name="Ninomiya K."/>
            <person name="Ohta K."/>
            <person name="Yamashita K."/>
            <person name="Mizuno K."/>
            <person name="Ohashi K."/>
        </authorList>
    </citation>
    <scope>INTERACTION WITH PLEKHG4B</scope>
</reference>
<reference key="31">
    <citation type="journal article" date="1996" name="J. Mol. Biol.">
        <title>The crystal structure and ion channel activity of human annexin II, a peripheral membrane protein.</title>
        <authorList>
            <person name="Burger A."/>
            <person name="Berendes R."/>
            <person name="Liemann S."/>
            <person name="Benz J."/>
            <person name="Hofmann A."/>
            <person name="Goettig P."/>
            <person name="Huber R."/>
            <person name="Gerke V."/>
            <person name="Tiel C."/>
            <person name="Roemisch J."/>
            <person name="Weber K."/>
        </authorList>
    </citation>
    <scope>X-RAY CRYSTALLOGRAPHY (2.2 ANGSTROMS)</scope>
</reference>
<reference evidence="24 25 26 27" key="32">
    <citation type="journal article" date="2017" name="Structure">
        <title>Regulation of the Equilibrium between Closed and Open Conformations of Annexin A2 by N-Terminal Phosphorylation and S100A4-Binding.</title>
        <authorList>
            <person name="Ecsedi P."/>
            <person name="Kiss B."/>
            <person name="Gogl G."/>
            <person name="Radnai L."/>
            <person name="Buday L."/>
            <person name="Koprivanacz K."/>
            <person name="Liliom K."/>
            <person name="Leveles I."/>
            <person name="Vertessy B."/>
            <person name="Jeszenoi N."/>
            <person name="Hetenyi C."/>
            <person name="Schlosser G."/>
            <person name="Katona G."/>
            <person name="Nyitray L."/>
        </authorList>
    </citation>
    <scope>X-RAY CRYSTALLOGRAPHY (1.90 ANGSTROMS) OF 2-339</scope>
    <scope>INTERACTION WITH S100A4</scope>
    <scope>PHOSPHORYLATION AT TYR-24 AND SER-26</scope>
    <scope>MUTAGENESIS OF SER-26</scope>
</reference>